<proteinExistence type="inferred from homology"/>
<gene>
    <name evidence="1" type="primary">upp</name>
    <name type="ordered locus">Ccon26_16320</name>
    <name type="ORF">CCC13826_0240</name>
</gene>
<name>UPP_CAMC1</name>
<protein>
    <recommendedName>
        <fullName evidence="1">Uracil phosphoribosyltransferase</fullName>
        <ecNumber evidence="1">2.4.2.9</ecNumber>
    </recommendedName>
    <alternativeName>
        <fullName evidence="1">UMP pyrophosphorylase</fullName>
    </alternativeName>
    <alternativeName>
        <fullName evidence="1">UPRTase</fullName>
    </alternativeName>
</protein>
<organism>
    <name type="scientific">Campylobacter concisus (strain 13826)</name>
    <dbReference type="NCBI Taxonomy" id="360104"/>
    <lineage>
        <taxon>Bacteria</taxon>
        <taxon>Pseudomonadati</taxon>
        <taxon>Campylobacterota</taxon>
        <taxon>Epsilonproteobacteria</taxon>
        <taxon>Campylobacterales</taxon>
        <taxon>Campylobacteraceae</taxon>
        <taxon>Campylobacter</taxon>
    </lineage>
</organism>
<feature type="chain" id="PRO_1000053694" description="Uracil phosphoribosyltransferase">
    <location>
        <begin position="1"/>
        <end position="208"/>
    </location>
</feature>
<feature type="binding site" evidence="1">
    <location>
        <position position="78"/>
    </location>
    <ligand>
        <name>5-phospho-alpha-D-ribose 1-diphosphate</name>
        <dbReference type="ChEBI" id="CHEBI:58017"/>
    </ligand>
</feature>
<feature type="binding site" evidence="1">
    <location>
        <position position="103"/>
    </location>
    <ligand>
        <name>5-phospho-alpha-D-ribose 1-diphosphate</name>
        <dbReference type="ChEBI" id="CHEBI:58017"/>
    </ligand>
</feature>
<feature type="binding site" evidence="1">
    <location>
        <begin position="130"/>
        <end position="138"/>
    </location>
    <ligand>
        <name>5-phospho-alpha-D-ribose 1-diphosphate</name>
        <dbReference type="ChEBI" id="CHEBI:58017"/>
    </ligand>
</feature>
<feature type="binding site" evidence="1">
    <location>
        <position position="193"/>
    </location>
    <ligand>
        <name>uracil</name>
        <dbReference type="ChEBI" id="CHEBI:17568"/>
    </ligand>
</feature>
<feature type="binding site" evidence="1">
    <location>
        <begin position="198"/>
        <end position="200"/>
    </location>
    <ligand>
        <name>uracil</name>
        <dbReference type="ChEBI" id="CHEBI:17568"/>
    </ligand>
</feature>
<feature type="binding site" evidence="1">
    <location>
        <position position="199"/>
    </location>
    <ligand>
        <name>5-phospho-alpha-D-ribose 1-diphosphate</name>
        <dbReference type="ChEBI" id="CHEBI:58017"/>
    </ligand>
</feature>
<evidence type="ECO:0000255" key="1">
    <source>
        <dbReference type="HAMAP-Rule" id="MF_01218"/>
    </source>
</evidence>
<comment type="function">
    <text evidence="1">Catalyzes the conversion of uracil and 5-phospho-alpha-D-ribose 1-diphosphate (PRPP) to UMP and diphosphate.</text>
</comment>
<comment type="catalytic activity">
    <reaction evidence="1">
        <text>UMP + diphosphate = 5-phospho-alpha-D-ribose 1-diphosphate + uracil</text>
        <dbReference type="Rhea" id="RHEA:13017"/>
        <dbReference type="ChEBI" id="CHEBI:17568"/>
        <dbReference type="ChEBI" id="CHEBI:33019"/>
        <dbReference type="ChEBI" id="CHEBI:57865"/>
        <dbReference type="ChEBI" id="CHEBI:58017"/>
        <dbReference type="EC" id="2.4.2.9"/>
    </reaction>
</comment>
<comment type="cofactor">
    <cofactor evidence="1">
        <name>Mg(2+)</name>
        <dbReference type="ChEBI" id="CHEBI:18420"/>
    </cofactor>
    <text evidence="1">Binds 1 Mg(2+) ion per subunit. The magnesium is bound as Mg-PRPP.</text>
</comment>
<comment type="activity regulation">
    <text evidence="1">Allosterically activated by GTP.</text>
</comment>
<comment type="pathway">
    <text evidence="1">Pyrimidine metabolism; UMP biosynthesis via salvage pathway; UMP from uracil: step 1/1.</text>
</comment>
<comment type="similarity">
    <text evidence="1">Belongs to the UPRTase family.</text>
</comment>
<accession>A7ZFB7</accession>
<dbReference type="EC" id="2.4.2.9" evidence="1"/>
<dbReference type="EMBL" id="CP000792">
    <property type="protein sequence ID" value="EAT98359.1"/>
    <property type="molecule type" value="Genomic_DNA"/>
</dbReference>
<dbReference type="RefSeq" id="WP_012140343.1">
    <property type="nucleotide sequence ID" value="NC_009802.2"/>
</dbReference>
<dbReference type="SMR" id="A7ZFB7"/>
<dbReference type="STRING" id="360104.CCC13826_0240"/>
<dbReference type="KEGG" id="cco:CCC13826_0240"/>
<dbReference type="eggNOG" id="COG0035">
    <property type="taxonomic scope" value="Bacteria"/>
</dbReference>
<dbReference type="HOGENOM" id="CLU_067096_2_2_7"/>
<dbReference type="OrthoDB" id="9781675at2"/>
<dbReference type="UniPathway" id="UPA00574">
    <property type="reaction ID" value="UER00636"/>
</dbReference>
<dbReference type="Proteomes" id="UP000001121">
    <property type="component" value="Chromosome"/>
</dbReference>
<dbReference type="GO" id="GO:0005525">
    <property type="term" value="F:GTP binding"/>
    <property type="evidence" value="ECO:0007669"/>
    <property type="project" value="UniProtKB-KW"/>
</dbReference>
<dbReference type="GO" id="GO:0000287">
    <property type="term" value="F:magnesium ion binding"/>
    <property type="evidence" value="ECO:0007669"/>
    <property type="project" value="UniProtKB-UniRule"/>
</dbReference>
<dbReference type="GO" id="GO:0004845">
    <property type="term" value="F:uracil phosphoribosyltransferase activity"/>
    <property type="evidence" value="ECO:0007669"/>
    <property type="project" value="UniProtKB-UniRule"/>
</dbReference>
<dbReference type="GO" id="GO:0044206">
    <property type="term" value="P:UMP salvage"/>
    <property type="evidence" value="ECO:0007669"/>
    <property type="project" value="UniProtKB-UniRule"/>
</dbReference>
<dbReference type="GO" id="GO:0006223">
    <property type="term" value="P:uracil salvage"/>
    <property type="evidence" value="ECO:0007669"/>
    <property type="project" value="InterPro"/>
</dbReference>
<dbReference type="CDD" id="cd06223">
    <property type="entry name" value="PRTases_typeI"/>
    <property type="match status" value="1"/>
</dbReference>
<dbReference type="FunFam" id="3.40.50.2020:FF:000003">
    <property type="entry name" value="Uracil phosphoribosyltransferase"/>
    <property type="match status" value="1"/>
</dbReference>
<dbReference type="Gene3D" id="3.40.50.2020">
    <property type="match status" value="1"/>
</dbReference>
<dbReference type="HAMAP" id="MF_01218_B">
    <property type="entry name" value="Upp_B"/>
    <property type="match status" value="1"/>
</dbReference>
<dbReference type="InterPro" id="IPR000836">
    <property type="entry name" value="PRibTrfase_dom"/>
</dbReference>
<dbReference type="InterPro" id="IPR029057">
    <property type="entry name" value="PRTase-like"/>
</dbReference>
<dbReference type="InterPro" id="IPR034332">
    <property type="entry name" value="Upp_B"/>
</dbReference>
<dbReference type="InterPro" id="IPR050054">
    <property type="entry name" value="UPRTase/APRTase"/>
</dbReference>
<dbReference type="InterPro" id="IPR005765">
    <property type="entry name" value="Ura_phspho_trans"/>
</dbReference>
<dbReference type="NCBIfam" id="NF001097">
    <property type="entry name" value="PRK00129.1"/>
    <property type="match status" value="1"/>
</dbReference>
<dbReference type="NCBIfam" id="TIGR01091">
    <property type="entry name" value="upp"/>
    <property type="match status" value="1"/>
</dbReference>
<dbReference type="PANTHER" id="PTHR32315">
    <property type="entry name" value="ADENINE PHOSPHORIBOSYLTRANSFERASE"/>
    <property type="match status" value="1"/>
</dbReference>
<dbReference type="PANTHER" id="PTHR32315:SF4">
    <property type="entry name" value="URACIL PHOSPHORIBOSYLTRANSFERASE, CHLOROPLASTIC"/>
    <property type="match status" value="1"/>
</dbReference>
<dbReference type="Pfam" id="PF14681">
    <property type="entry name" value="UPRTase"/>
    <property type="match status" value="1"/>
</dbReference>
<dbReference type="SUPFAM" id="SSF53271">
    <property type="entry name" value="PRTase-like"/>
    <property type="match status" value="1"/>
</dbReference>
<keyword id="KW-0021">Allosteric enzyme</keyword>
<keyword id="KW-0328">Glycosyltransferase</keyword>
<keyword id="KW-0342">GTP-binding</keyword>
<keyword id="KW-0460">Magnesium</keyword>
<keyword id="KW-0547">Nucleotide-binding</keyword>
<keyword id="KW-0808">Transferase</keyword>
<reference key="1">
    <citation type="submission" date="2007-10" db="EMBL/GenBank/DDBJ databases">
        <title>Genome sequence of Campylobacter concisus 13826 isolated from human feces.</title>
        <authorList>
            <person name="Fouts D.E."/>
            <person name="Mongodin E.F."/>
            <person name="Puiu D."/>
            <person name="Sebastian Y."/>
            <person name="Miller W.G."/>
            <person name="Mandrell R.E."/>
            <person name="On S."/>
            <person name="Nelson K.E."/>
        </authorList>
    </citation>
    <scope>NUCLEOTIDE SEQUENCE [LARGE SCALE GENOMIC DNA]</scope>
    <source>
        <strain>13826</strain>
    </source>
</reference>
<sequence length="208" mass="23398">MQNVKLISHPLIEHKLTILRDKNTQPFQFRMLVDEISYLMIFEATRNLKVKDVKVQTPVALADAKRLTTKVMICPILRAALGMLDSVFTIIPDASVGFLGFQRNEETAQAEFFYAKLPKDAKERMAIIIDPMFATGGTAIDAVKFLREKGVKEIKFISIIAAPEGLKRFSEIYPDVEVYTASIDEKLNEKNYIVPGLGDAGDRVFNTL</sequence>